<reference key="1">
    <citation type="journal article" date="2009" name="BMC Evol. Biol.">
        <title>Nucleotide diversity of the Chlamydomonas reinhardtii plastid genome: addressing the mutational-hazard hypothesis.</title>
        <authorList>
            <person name="Smith D.R."/>
            <person name="Lee R.W."/>
        </authorList>
    </citation>
    <scope>NUCLEOTIDE SEQUENCE [LARGE SCALE GENOMIC DNA]</scope>
    <source>
        <strain>CC-503</strain>
    </source>
</reference>
<reference key="2">
    <citation type="journal article" date="2002" name="Plant Cell">
        <title>The Chlamydomonas reinhardtii plastid chromosome: islands of genes in a sea of repeats.</title>
        <authorList>
            <person name="Maul J.E."/>
            <person name="Lilly J.W."/>
            <person name="Cui L."/>
            <person name="dePamphilis C.W."/>
            <person name="Miller W."/>
            <person name="Harris E.H."/>
            <person name="Stern D.B."/>
        </authorList>
    </citation>
    <scope>IDENTIFICATION</scope>
    <scope>COMPLETE PLASTID GENOME</scope>
</reference>
<reference key="3">
    <citation type="journal article" date="1995" name="J. Biol. Chem.">
        <title>A mutant strain of Chlamydomonas reinhardtii lacking the chloroplast photosystem II psbI gene grows photoautotrophically.</title>
        <authorList>
            <person name="Kuenstner P."/>
            <person name="Guardiola A."/>
            <person name="Takahashi Y."/>
            <person name="Rochaix J.D."/>
        </authorList>
    </citation>
    <scope>FUNCTION</scope>
    <scope>DISRUPTION PHENOTYPE</scope>
    <source>
        <strain>137c / CC-125</strain>
    </source>
</reference>
<evidence type="ECO:0000255" key="1">
    <source>
        <dbReference type="HAMAP-Rule" id="MF_01316"/>
    </source>
</evidence>
<evidence type="ECO:0000269" key="2">
    <source>
    </source>
</evidence>
<evidence type="ECO:0007829" key="3">
    <source>
        <dbReference type="PDB" id="8KDE"/>
    </source>
</evidence>
<protein>
    <recommendedName>
        <fullName evidence="1">Photosystem II reaction center protein I</fullName>
        <shortName evidence="1">PSII-I</shortName>
    </recommendedName>
    <alternativeName>
        <fullName evidence="1">PSII 4.8 kDa protein</fullName>
    </alternativeName>
</protein>
<dbReference type="EMBL" id="FJ423446">
    <property type="protein sequence ID" value="ACJ50138.1"/>
    <property type="molecule type" value="Genomic_DNA"/>
</dbReference>
<dbReference type="EMBL" id="BK000554">
    <property type="protein sequence ID" value="DAA00952.1"/>
    <property type="molecule type" value="Genomic_DNA"/>
</dbReference>
<dbReference type="RefSeq" id="NP_958407.1">
    <property type="nucleotide sequence ID" value="NC_005353.1"/>
</dbReference>
<dbReference type="PDB" id="6KAC">
    <property type="method" value="EM"/>
    <property type="resolution" value="2.70 A"/>
    <property type="chains" value="I/i=1-37"/>
</dbReference>
<dbReference type="PDB" id="6KAD">
    <property type="method" value="EM"/>
    <property type="resolution" value="3.40 A"/>
    <property type="chains" value="I/i=1-37"/>
</dbReference>
<dbReference type="PDB" id="6KAF">
    <property type="method" value="EM"/>
    <property type="resolution" value="3.73 A"/>
    <property type="chains" value="I/i=1-37"/>
</dbReference>
<dbReference type="PDB" id="8KDE">
    <property type="method" value="EM"/>
    <property type="resolution" value="2.60 A"/>
    <property type="chains" value="I=1-37"/>
</dbReference>
<dbReference type="PDB" id="8R2I">
    <property type="method" value="EM"/>
    <property type="resolution" value="2.90 A"/>
    <property type="chains" value="I=1-28"/>
</dbReference>
<dbReference type="PDB" id="8ZEE">
    <property type="method" value="EM"/>
    <property type="resolution" value="2.90 A"/>
    <property type="chains" value="I=1-37"/>
</dbReference>
<dbReference type="PDBsum" id="6KAC"/>
<dbReference type="PDBsum" id="6KAD"/>
<dbReference type="PDBsum" id="6KAF"/>
<dbReference type="PDBsum" id="8KDE"/>
<dbReference type="PDBsum" id="8R2I"/>
<dbReference type="PDBsum" id="8ZEE"/>
<dbReference type="EMDB" id="EMD-18848"/>
<dbReference type="EMDB" id="EMD-37133"/>
<dbReference type="EMDB" id="EMD-60026"/>
<dbReference type="EMDB" id="EMD-9955"/>
<dbReference type="EMDB" id="EMD-9956"/>
<dbReference type="EMDB" id="EMD-9957"/>
<dbReference type="SMR" id="P59763"/>
<dbReference type="FunCoup" id="P59763">
    <property type="interactions" value="40"/>
</dbReference>
<dbReference type="STRING" id="3055.P59763"/>
<dbReference type="PaxDb" id="3055-DAA00952"/>
<dbReference type="GeneID" id="2717042"/>
<dbReference type="KEGG" id="cre:ChreCp051"/>
<dbReference type="eggNOG" id="ENOG502SEUZ">
    <property type="taxonomic scope" value="Eukaryota"/>
</dbReference>
<dbReference type="HOGENOM" id="CLU_212150_0_0_1"/>
<dbReference type="InParanoid" id="P59763"/>
<dbReference type="Proteomes" id="UP000006906">
    <property type="component" value="Chloroplast"/>
</dbReference>
<dbReference type="GO" id="GO:0009535">
    <property type="term" value="C:chloroplast thylakoid membrane"/>
    <property type="evidence" value="ECO:0007669"/>
    <property type="project" value="UniProtKB-SubCell"/>
</dbReference>
<dbReference type="GO" id="GO:0009539">
    <property type="term" value="C:photosystem II reaction center"/>
    <property type="evidence" value="ECO:0007669"/>
    <property type="project" value="InterPro"/>
</dbReference>
<dbReference type="GO" id="GO:0015979">
    <property type="term" value="P:photosynthesis"/>
    <property type="evidence" value="ECO:0007669"/>
    <property type="project" value="UniProtKB-UniRule"/>
</dbReference>
<dbReference type="HAMAP" id="MF_01316">
    <property type="entry name" value="PSII_PsbI"/>
    <property type="match status" value="1"/>
</dbReference>
<dbReference type="InterPro" id="IPR003686">
    <property type="entry name" value="PSII_PsbI"/>
</dbReference>
<dbReference type="InterPro" id="IPR037271">
    <property type="entry name" value="PSII_PsbI_sf"/>
</dbReference>
<dbReference type="NCBIfam" id="NF002735">
    <property type="entry name" value="PRK02655.1"/>
    <property type="match status" value="1"/>
</dbReference>
<dbReference type="PANTHER" id="PTHR35772">
    <property type="entry name" value="PHOTOSYSTEM II REACTION CENTER PROTEIN I"/>
    <property type="match status" value="1"/>
</dbReference>
<dbReference type="PANTHER" id="PTHR35772:SF1">
    <property type="entry name" value="PHOTOSYSTEM II REACTION CENTER PROTEIN I"/>
    <property type="match status" value="1"/>
</dbReference>
<dbReference type="Pfam" id="PF02532">
    <property type="entry name" value="PsbI"/>
    <property type="match status" value="1"/>
</dbReference>
<dbReference type="SUPFAM" id="SSF161041">
    <property type="entry name" value="Photosystem II reaction center protein I, PsbI"/>
    <property type="match status" value="1"/>
</dbReference>
<name>PSBI_CHLRE</name>
<organism>
    <name type="scientific">Chlamydomonas reinhardtii</name>
    <name type="common">Chlamydomonas smithii</name>
    <dbReference type="NCBI Taxonomy" id="3055"/>
    <lineage>
        <taxon>Eukaryota</taxon>
        <taxon>Viridiplantae</taxon>
        <taxon>Chlorophyta</taxon>
        <taxon>core chlorophytes</taxon>
        <taxon>Chlorophyceae</taxon>
        <taxon>CS clade</taxon>
        <taxon>Chlamydomonadales</taxon>
        <taxon>Chlamydomonadaceae</taxon>
        <taxon>Chlamydomonas</taxon>
    </lineage>
</organism>
<sequence length="37" mass="4242">MLTLKIFVYTVVTFFVCLFIFGFLSNDPARNPGKNLD</sequence>
<gene>
    <name evidence="1" type="primary">psbI</name>
</gene>
<geneLocation type="chloroplast"/>
<keyword id="KW-0002">3D-structure</keyword>
<keyword id="KW-0150">Chloroplast</keyword>
<keyword id="KW-0472">Membrane</keyword>
<keyword id="KW-0602">Photosynthesis</keyword>
<keyword id="KW-0604">Photosystem II</keyword>
<keyword id="KW-0934">Plastid</keyword>
<keyword id="KW-0674">Reaction center</keyword>
<keyword id="KW-1185">Reference proteome</keyword>
<keyword id="KW-0793">Thylakoid</keyword>
<keyword id="KW-0812">Transmembrane</keyword>
<keyword id="KW-1133">Transmembrane helix</keyword>
<comment type="function">
    <text evidence="1 2">One of the components of the core complex of photosystem II (PSII), required for its stability and/or assembly (PubMed:7721898). PSII is a light-driven water:plastoquinone oxidoreductase that uses light energy to abstract electrons from H(2)O, generating O(2) and a proton gradient subsequently used for ATP formation. It consists of a core antenna complex that captures photons, and an electron transfer chain that converts photonic excitation into a charge separation.</text>
</comment>
<comment type="subunit">
    <text evidence="1">PSII is composed of 1 copy each of membrane proteins PsbA, PsbB, PsbC, PsbD, PsbE, PsbF, PsbH, PsbI, PsbJ, PsbK, PsbL, PsbM, PsbT, PsbX, PsbY, PsbZ, Psb30/Ycf12, at least 3 peripheral proteins of the oxygen-evolving complex and a large number of cofactors. It forms dimeric complexes.</text>
</comment>
<comment type="subcellular location">
    <subcellularLocation>
        <location evidence="1">Plastid</location>
        <location evidence="1">Chloroplast thylakoid membrane</location>
        <topology evidence="1">Single-pass membrane protein</topology>
    </subcellularLocation>
</comment>
<comment type="disruption phenotype">
    <text evidence="2">Able to grow photoautotrophically only in dim light, oxygen evolution is 10-20% of wild-type, reduced accumulation of protein D1 (PsbA).</text>
</comment>
<comment type="similarity">
    <text evidence="1">Belongs to the PsbI family.</text>
</comment>
<feature type="chain" id="PRO_0000219621" description="Photosystem II reaction center protein I">
    <location>
        <begin position="1"/>
        <end position="37"/>
    </location>
</feature>
<feature type="transmembrane region" description="Helical" evidence="1">
    <location>
        <begin position="4"/>
        <end position="24"/>
    </location>
</feature>
<feature type="helix" evidence="3">
    <location>
        <begin position="2"/>
        <end position="23"/>
    </location>
</feature>
<feature type="turn" evidence="3">
    <location>
        <begin position="24"/>
        <end position="26"/>
    </location>
</feature>
<feature type="helix" evidence="3">
    <location>
        <begin position="27"/>
        <end position="29"/>
    </location>
</feature>
<feature type="strand" evidence="3">
    <location>
        <begin position="31"/>
        <end position="33"/>
    </location>
</feature>
<proteinExistence type="evidence at protein level"/>
<accession>P59763</accession>
<accession>B7U1J1</accession>